<gene>
    <name evidence="1" type="primary">nadD</name>
    <name type="ordered locus">Dalk_4127</name>
</gene>
<evidence type="ECO:0000255" key="1">
    <source>
        <dbReference type="HAMAP-Rule" id="MF_00244"/>
    </source>
</evidence>
<proteinExistence type="inferred from homology"/>
<reference key="1">
    <citation type="journal article" date="2012" name="Environ. Microbiol.">
        <title>The genome sequence of Desulfatibacillum alkenivorans AK-01: a blueprint for anaerobic alkane oxidation.</title>
        <authorList>
            <person name="Callaghan A.V."/>
            <person name="Morris B.E."/>
            <person name="Pereira I.A."/>
            <person name="McInerney M.J."/>
            <person name="Austin R.N."/>
            <person name="Groves J.T."/>
            <person name="Kukor J.J."/>
            <person name="Suflita J.M."/>
            <person name="Young L.Y."/>
            <person name="Zylstra G.J."/>
            <person name="Wawrik B."/>
        </authorList>
    </citation>
    <scope>NUCLEOTIDE SEQUENCE [LARGE SCALE GENOMIC DNA]</scope>
    <source>
        <strain>AK-01</strain>
    </source>
</reference>
<sequence>MRLGIYGGTFDPIHIGHLRMAVEVQEKFSLDKVVLIPCNTPPHKENGAAASARDRLAMVRMAVEGRAGLEASDMEISQGGPSYTVATLEALQSPDKELFFILGLDAFLEIHTWKEYERLFSLAHFIVLARPWQGDRAEMFHVEQYIRENLPGLAVPEPDQGYFRALHENKRIYFAQTTALDISATHIRKTVNQGKSIAFLAPESVEKYIKRQGLYL</sequence>
<accession>B8FMU1</accession>
<name>NADD_DESAL</name>
<comment type="function">
    <text evidence="1">Catalyzes the reversible adenylation of nicotinate mononucleotide (NaMN) to nicotinic acid adenine dinucleotide (NaAD).</text>
</comment>
<comment type="catalytic activity">
    <reaction evidence="1">
        <text>nicotinate beta-D-ribonucleotide + ATP + H(+) = deamido-NAD(+) + diphosphate</text>
        <dbReference type="Rhea" id="RHEA:22860"/>
        <dbReference type="ChEBI" id="CHEBI:15378"/>
        <dbReference type="ChEBI" id="CHEBI:30616"/>
        <dbReference type="ChEBI" id="CHEBI:33019"/>
        <dbReference type="ChEBI" id="CHEBI:57502"/>
        <dbReference type="ChEBI" id="CHEBI:58437"/>
        <dbReference type="EC" id="2.7.7.18"/>
    </reaction>
</comment>
<comment type="pathway">
    <text evidence="1">Cofactor biosynthesis; NAD(+) biosynthesis; deamido-NAD(+) from nicotinate D-ribonucleotide: step 1/1.</text>
</comment>
<comment type="similarity">
    <text evidence="1">Belongs to the NadD family.</text>
</comment>
<protein>
    <recommendedName>
        <fullName evidence="1">Probable nicotinate-nucleotide adenylyltransferase</fullName>
        <ecNumber evidence="1">2.7.7.18</ecNumber>
    </recommendedName>
    <alternativeName>
        <fullName evidence="1">Deamido-NAD(+) diphosphorylase</fullName>
    </alternativeName>
    <alternativeName>
        <fullName evidence="1">Deamido-NAD(+) pyrophosphorylase</fullName>
    </alternativeName>
    <alternativeName>
        <fullName evidence="1">Nicotinate mononucleotide adenylyltransferase</fullName>
        <shortName evidence="1">NaMN adenylyltransferase</shortName>
    </alternativeName>
</protein>
<dbReference type="EC" id="2.7.7.18" evidence="1"/>
<dbReference type="EMBL" id="CP001322">
    <property type="protein sequence ID" value="ACL05811.1"/>
    <property type="molecule type" value="Genomic_DNA"/>
</dbReference>
<dbReference type="RefSeq" id="WP_015948858.1">
    <property type="nucleotide sequence ID" value="NC_011768.1"/>
</dbReference>
<dbReference type="SMR" id="B8FMU1"/>
<dbReference type="KEGG" id="dal:Dalk_4127"/>
<dbReference type="eggNOG" id="COG1057">
    <property type="taxonomic scope" value="Bacteria"/>
</dbReference>
<dbReference type="HOGENOM" id="CLU_069765_3_1_7"/>
<dbReference type="UniPathway" id="UPA00253">
    <property type="reaction ID" value="UER00332"/>
</dbReference>
<dbReference type="Proteomes" id="UP000000739">
    <property type="component" value="Chromosome"/>
</dbReference>
<dbReference type="GO" id="GO:0005524">
    <property type="term" value="F:ATP binding"/>
    <property type="evidence" value="ECO:0007669"/>
    <property type="project" value="UniProtKB-KW"/>
</dbReference>
<dbReference type="GO" id="GO:0004515">
    <property type="term" value="F:nicotinate-nucleotide adenylyltransferase activity"/>
    <property type="evidence" value="ECO:0007669"/>
    <property type="project" value="UniProtKB-UniRule"/>
</dbReference>
<dbReference type="GO" id="GO:0009435">
    <property type="term" value="P:NAD biosynthetic process"/>
    <property type="evidence" value="ECO:0007669"/>
    <property type="project" value="UniProtKB-UniRule"/>
</dbReference>
<dbReference type="CDD" id="cd02165">
    <property type="entry name" value="NMNAT"/>
    <property type="match status" value="1"/>
</dbReference>
<dbReference type="Gene3D" id="3.40.50.620">
    <property type="entry name" value="HUPs"/>
    <property type="match status" value="1"/>
</dbReference>
<dbReference type="HAMAP" id="MF_00244">
    <property type="entry name" value="NaMN_adenylyltr"/>
    <property type="match status" value="1"/>
</dbReference>
<dbReference type="InterPro" id="IPR004821">
    <property type="entry name" value="Cyt_trans-like"/>
</dbReference>
<dbReference type="InterPro" id="IPR005248">
    <property type="entry name" value="NadD/NMNAT"/>
</dbReference>
<dbReference type="InterPro" id="IPR014729">
    <property type="entry name" value="Rossmann-like_a/b/a_fold"/>
</dbReference>
<dbReference type="NCBIfam" id="TIGR00125">
    <property type="entry name" value="cyt_tran_rel"/>
    <property type="match status" value="1"/>
</dbReference>
<dbReference type="NCBIfam" id="TIGR00482">
    <property type="entry name" value="nicotinate (nicotinamide) nucleotide adenylyltransferase"/>
    <property type="match status" value="1"/>
</dbReference>
<dbReference type="NCBIfam" id="NF000839">
    <property type="entry name" value="PRK00071.1-1"/>
    <property type="match status" value="1"/>
</dbReference>
<dbReference type="NCBIfam" id="NF000840">
    <property type="entry name" value="PRK00071.1-3"/>
    <property type="match status" value="1"/>
</dbReference>
<dbReference type="PANTHER" id="PTHR39321">
    <property type="entry name" value="NICOTINATE-NUCLEOTIDE ADENYLYLTRANSFERASE-RELATED"/>
    <property type="match status" value="1"/>
</dbReference>
<dbReference type="PANTHER" id="PTHR39321:SF3">
    <property type="entry name" value="PHOSPHOPANTETHEINE ADENYLYLTRANSFERASE"/>
    <property type="match status" value="1"/>
</dbReference>
<dbReference type="Pfam" id="PF01467">
    <property type="entry name" value="CTP_transf_like"/>
    <property type="match status" value="1"/>
</dbReference>
<dbReference type="SUPFAM" id="SSF52374">
    <property type="entry name" value="Nucleotidylyl transferase"/>
    <property type="match status" value="1"/>
</dbReference>
<organism>
    <name type="scientific">Desulfatibacillum aliphaticivorans</name>
    <dbReference type="NCBI Taxonomy" id="218208"/>
    <lineage>
        <taxon>Bacteria</taxon>
        <taxon>Pseudomonadati</taxon>
        <taxon>Thermodesulfobacteriota</taxon>
        <taxon>Desulfobacteria</taxon>
        <taxon>Desulfobacterales</taxon>
        <taxon>Desulfatibacillaceae</taxon>
        <taxon>Desulfatibacillum</taxon>
    </lineage>
</organism>
<keyword id="KW-0067">ATP-binding</keyword>
<keyword id="KW-0520">NAD</keyword>
<keyword id="KW-0547">Nucleotide-binding</keyword>
<keyword id="KW-0548">Nucleotidyltransferase</keyword>
<keyword id="KW-0662">Pyridine nucleotide biosynthesis</keyword>
<keyword id="KW-1185">Reference proteome</keyword>
<keyword id="KW-0808">Transferase</keyword>
<feature type="chain" id="PRO_1000192231" description="Probable nicotinate-nucleotide adenylyltransferase">
    <location>
        <begin position="1"/>
        <end position="216"/>
    </location>
</feature>